<organism>
    <name type="scientific">Mus musculus</name>
    <name type="common">Mouse</name>
    <dbReference type="NCBI Taxonomy" id="10090"/>
    <lineage>
        <taxon>Eukaryota</taxon>
        <taxon>Metazoa</taxon>
        <taxon>Chordata</taxon>
        <taxon>Craniata</taxon>
        <taxon>Vertebrata</taxon>
        <taxon>Euteleostomi</taxon>
        <taxon>Mammalia</taxon>
        <taxon>Eutheria</taxon>
        <taxon>Euarchontoglires</taxon>
        <taxon>Glires</taxon>
        <taxon>Rodentia</taxon>
        <taxon>Myomorpha</taxon>
        <taxon>Muroidea</taxon>
        <taxon>Muridae</taxon>
        <taxon>Murinae</taxon>
        <taxon>Mus</taxon>
        <taxon>Mus</taxon>
    </lineage>
</organism>
<feature type="chain" id="PRO_0000289120" description="Leukocyte elastase inhibitor A">
    <location>
        <begin position="1"/>
        <end position="379"/>
    </location>
</feature>
<feature type="region of interest" description="CARD-binding motif (CBM)" evidence="2">
    <location>
        <begin position="351"/>
        <end position="379"/>
    </location>
</feature>
<feature type="site" description="Reactive bond" evidence="1">
    <location>
        <begin position="344"/>
        <end position="345"/>
    </location>
</feature>
<feature type="modified residue" description="Phosphoserine" evidence="3">
    <location>
        <position position="300"/>
    </location>
</feature>
<feature type="sequence conflict" description="In Ref. 3; BAB25964." evidence="11" ref="3">
    <original>L</original>
    <variation>Q</variation>
    <location>
        <position position="73"/>
    </location>
</feature>
<feature type="sequence conflict" description="In Ref. 3; BAB23335." evidence="11" ref="3">
    <original>E</original>
    <variation>K</variation>
    <location>
        <position position="146"/>
    </location>
</feature>
<feature type="sequence conflict" description="In Ref. 3; BAB23335." evidence="11" ref="3">
    <original>D</original>
    <variation>N</variation>
    <location>
        <position position="154"/>
    </location>
</feature>
<feature type="sequence conflict" description="In Ref. 3; BAB23335." evidence="11" ref="3">
    <original>K</original>
    <variation>R</variation>
    <location>
        <position position="189"/>
    </location>
</feature>
<feature type="sequence conflict" description="In Ref. 3; BAB25964." evidence="11" ref="3">
    <original>K</original>
    <variation>R</variation>
    <location>
        <position position="193"/>
    </location>
</feature>
<feature type="sequence conflict" description="In Ref. 3; BAB23335." evidence="11" ref="3">
    <original>R</original>
    <variation>L</variation>
    <location>
        <position position="261"/>
    </location>
</feature>
<feature type="sequence conflict" description="In Ref. 3; BAB23335." evidence="11" ref="3">
    <original>E</original>
    <variation>K</variation>
    <location>
        <position position="265"/>
    </location>
</feature>
<feature type="sequence conflict" description="In Ref. 3; BAB23335." evidence="11" ref="3">
    <original>E</original>
    <variation>K</variation>
    <location>
        <position position="280"/>
    </location>
</feature>
<feature type="sequence conflict" description="In Ref. 3; BAB23335." evidence="11" ref="3">
    <original>R</original>
    <variation>P</variation>
    <location>
        <position position="290"/>
    </location>
</feature>
<feature type="sequence conflict" description="In Ref. 3; BAB23335." evidence="11" ref="3">
    <original>K</original>
    <variation>E</variation>
    <location>
        <position position="301"/>
    </location>
</feature>
<feature type="sequence conflict" description="In Ref. 3; BAB23335." evidence="11" ref="3">
    <original>L</original>
    <variation>S</variation>
    <location>
        <position position="313"/>
    </location>
</feature>
<feature type="sequence conflict" description="In Ref. 3; BAB23335." evidence="11" ref="3">
    <original>V</original>
    <variation>P</variation>
    <location>
        <position position="319"/>
    </location>
</feature>
<feature type="sequence conflict" description="In Ref. 3; BAB23335." evidence="11" ref="3">
    <original>V</original>
    <variation>F</variation>
    <location>
        <position position="324"/>
    </location>
</feature>
<feature type="sequence conflict" description="In Ref. 3; BAE35797." evidence="11" ref="3">
    <original>A</original>
    <variation>V</variation>
    <location>
        <position position="341"/>
    </location>
</feature>
<feature type="sequence conflict" description="In Ref. 3; BAB23335." evidence="11" ref="3">
    <original>I</original>
    <variation>M</variation>
    <location>
        <position position="362"/>
    </location>
</feature>
<comment type="function">
    <text evidence="5 6 7 8 9 10">Neutrophil serine protease inhibitor that plays an essential role in the regulation of the innate immune response, inflammation and cellular homeostasis (PubMed:17664292, PubMed:21248149, PubMed:21683252, PubMed:30692621). Acts primarily to protect the cell from proteases released in the cytoplasm during stress or infection (PubMed:17664292). These proteases are important in killing microbes but when released from granules, these potent enzymes also destroy host proteins and contribute to mortality. Regulates the activity of the neutrophil proteases elastase, cathepsin G, proteinase-3, chymase, chymotrypsin, and kallikrein-3. Also acts as a potent intracellular inhibitor of granzyme H (PubMed:12189154). During inflammation, limits the activity of inflammatory caspases CASP1 and CASP4 by suppressing their caspase-recruitment domain (CARD) oligomerization and enzymatic activation (PubMed:30692621). In addition, promotes the proliferation of beta-cells when secreted (PubMed:26701651).</text>
</comment>
<comment type="subunit">
    <text evidence="10">Monomer. Interacts (via C-terminus) with CASP1 and CASP4 (via CARD domain); these interactions regulate the activity of inflammatory caspases.</text>
</comment>
<comment type="subcellular location">
    <subcellularLocation>
        <location evidence="9">Secreted</location>
    </subcellularLocation>
    <subcellularLocation>
        <location evidence="2">Cytoplasm</location>
    </subcellularLocation>
    <subcellularLocation>
        <location evidence="2">Cytolytic granule</location>
    </subcellularLocation>
    <subcellularLocation>
        <location evidence="2">Early endosome</location>
    </subcellularLocation>
</comment>
<comment type="tissue specificity">
    <text evidence="4 5">Ubiquitous with higher expression in pancreas, spleen and bone marrow.</text>
</comment>
<comment type="disruption phenotype">
    <text evidence="6 7 8 9 10">Mutant mice do not differ from wild-type in growth, litter size or life span when maintained in a specific pathogen-free environment (PubMed:17664292). However, they have increased mortality in association with late-onset failed bacterial clearance, and specifically increased neutrophil death (PubMed:17664292, PubMed:30692621). Mutant mice also show a severe defect in the bone marrow reserve of mature neutrophils demonstrating a key role for in cellular homeostasis (PubMed:21248149, PubMed:21683252). In addition, Serpinb1a-deficiency leads to maladaptive beta-cell proliferation in insulin-resistant states (PubMed:26701651).</text>
</comment>
<comment type="similarity">
    <text evidence="11">Belongs to the serpin family. Ov-serpin subfamily.</text>
</comment>
<comment type="sequence caution" evidence="11">
    <conflict type="frameshift">
        <sequence resource="EMBL-CDS" id="BAB23335"/>
    </conflict>
</comment>
<comment type="sequence caution" evidence="11">
    <conflict type="erroneous gene model prediction">
        <sequence resource="EMBL-CDS" id="CAI25648"/>
    </conflict>
</comment>
<keyword id="KW-0963">Cytoplasm</keyword>
<keyword id="KW-0903">Direct protein sequencing</keyword>
<keyword id="KW-0967">Endosome</keyword>
<keyword id="KW-0458">Lysosome</keyword>
<keyword id="KW-0597">Phosphoprotein</keyword>
<keyword id="KW-0646">Protease inhibitor</keyword>
<keyword id="KW-1185">Reference proteome</keyword>
<keyword id="KW-0964">Secreted</keyword>
<keyword id="KW-0722">Serine protease inhibitor</keyword>
<proteinExistence type="evidence at protein level"/>
<evidence type="ECO:0000250" key="1"/>
<evidence type="ECO:0000250" key="2">
    <source>
        <dbReference type="UniProtKB" id="P30740"/>
    </source>
</evidence>
<evidence type="ECO:0000250" key="3">
    <source>
        <dbReference type="UniProtKB" id="Q4G075"/>
    </source>
</evidence>
<evidence type="ECO:0000269" key="4">
    <source>
    </source>
</evidence>
<evidence type="ECO:0000269" key="5">
    <source>
    </source>
</evidence>
<evidence type="ECO:0000269" key="6">
    <source>
    </source>
</evidence>
<evidence type="ECO:0000269" key="7">
    <source>
    </source>
</evidence>
<evidence type="ECO:0000269" key="8">
    <source>
    </source>
</evidence>
<evidence type="ECO:0000269" key="9">
    <source>
    </source>
</evidence>
<evidence type="ECO:0000269" key="10">
    <source>
    </source>
</evidence>
<evidence type="ECO:0000305" key="11"/>
<reference key="1">
    <citation type="journal article" date="2002" name="Genomics">
        <title>Comparison of human chromosome 6p25 with mouse chromosome 13 reveals a greatly expanded ov-serpin gene repertoire in the mouse.</title>
        <authorList>
            <person name="Kaiserman D."/>
            <person name="Knaggs S."/>
            <person name="Scarff K.L."/>
            <person name="Gillard A."/>
            <person name="Mirza G."/>
            <person name="Cadman M."/>
            <person name="McKeone R."/>
            <person name="Denny P."/>
            <person name="Cooley J."/>
            <person name="Benarafa C."/>
            <person name="Remold-O'Donnell E."/>
            <person name="Ragoussis J."/>
            <person name="Bird P.I."/>
        </authorList>
    </citation>
    <scope>NUCLEOTIDE SEQUENCE [MRNA]</scope>
    <scope>TISSUE SPECIFICITY</scope>
    <source>
        <strain>129S6/SvEvTac</strain>
        <strain>C57BL/6J</strain>
        <tissue>Spleen</tissue>
    </source>
</reference>
<reference key="2">
    <citation type="journal article" date="2002" name="J. Biol. Chem.">
        <title>Characterization of four murine homologs of the human ov-serpin monocyte neutrophil elastase inhibitor MNEI (SERPINB1).</title>
        <authorList>
            <person name="Benarafa C."/>
            <person name="Cooley J."/>
            <person name="Zeng W."/>
            <person name="Bird P.I."/>
            <person name="Remold-O'Donnell E."/>
        </authorList>
    </citation>
    <scope>NUCLEOTIDE SEQUENCE [GENOMIC DNA]</scope>
    <scope>FUNCTION</scope>
    <scope>TISSUE SPECIFICITY</scope>
    <source>
        <strain>129S6/SvEvTac</strain>
        <tissue>Spleen</tissue>
    </source>
</reference>
<reference key="3">
    <citation type="journal article" date="2005" name="Science">
        <title>The transcriptional landscape of the mammalian genome.</title>
        <authorList>
            <person name="Carninci P."/>
            <person name="Kasukawa T."/>
            <person name="Katayama S."/>
            <person name="Gough J."/>
            <person name="Frith M.C."/>
            <person name="Maeda N."/>
            <person name="Oyama R."/>
            <person name="Ravasi T."/>
            <person name="Lenhard B."/>
            <person name="Wells C."/>
            <person name="Kodzius R."/>
            <person name="Shimokawa K."/>
            <person name="Bajic V.B."/>
            <person name="Brenner S.E."/>
            <person name="Batalov S."/>
            <person name="Forrest A.R."/>
            <person name="Zavolan M."/>
            <person name="Davis M.J."/>
            <person name="Wilming L.G."/>
            <person name="Aidinis V."/>
            <person name="Allen J.E."/>
            <person name="Ambesi-Impiombato A."/>
            <person name="Apweiler R."/>
            <person name="Aturaliya R.N."/>
            <person name="Bailey T.L."/>
            <person name="Bansal M."/>
            <person name="Baxter L."/>
            <person name="Beisel K.W."/>
            <person name="Bersano T."/>
            <person name="Bono H."/>
            <person name="Chalk A.M."/>
            <person name="Chiu K.P."/>
            <person name="Choudhary V."/>
            <person name="Christoffels A."/>
            <person name="Clutterbuck D.R."/>
            <person name="Crowe M.L."/>
            <person name="Dalla E."/>
            <person name="Dalrymple B.P."/>
            <person name="de Bono B."/>
            <person name="Della Gatta G."/>
            <person name="di Bernardo D."/>
            <person name="Down T."/>
            <person name="Engstrom P."/>
            <person name="Fagiolini M."/>
            <person name="Faulkner G."/>
            <person name="Fletcher C.F."/>
            <person name="Fukushima T."/>
            <person name="Furuno M."/>
            <person name="Futaki S."/>
            <person name="Gariboldi M."/>
            <person name="Georgii-Hemming P."/>
            <person name="Gingeras T.R."/>
            <person name="Gojobori T."/>
            <person name="Green R.E."/>
            <person name="Gustincich S."/>
            <person name="Harbers M."/>
            <person name="Hayashi Y."/>
            <person name="Hensch T.K."/>
            <person name="Hirokawa N."/>
            <person name="Hill D."/>
            <person name="Huminiecki L."/>
            <person name="Iacono M."/>
            <person name="Ikeo K."/>
            <person name="Iwama A."/>
            <person name="Ishikawa T."/>
            <person name="Jakt M."/>
            <person name="Kanapin A."/>
            <person name="Katoh M."/>
            <person name="Kawasawa Y."/>
            <person name="Kelso J."/>
            <person name="Kitamura H."/>
            <person name="Kitano H."/>
            <person name="Kollias G."/>
            <person name="Krishnan S.P."/>
            <person name="Kruger A."/>
            <person name="Kummerfeld S.K."/>
            <person name="Kurochkin I.V."/>
            <person name="Lareau L.F."/>
            <person name="Lazarevic D."/>
            <person name="Lipovich L."/>
            <person name="Liu J."/>
            <person name="Liuni S."/>
            <person name="McWilliam S."/>
            <person name="Madan Babu M."/>
            <person name="Madera M."/>
            <person name="Marchionni L."/>
            <person name="Matsuda H."/>
            <person name="Matsuzawa S."/>
            <person name="Miki H."/>
            <person name="Mignone F."/>
            <person name="Miyake S."/>
            <person name="Morris K."/>
            <person name="Mottagui-Tabar S."/>
            <person name="Mulder N."/>
            <person name="Nakano N."/>
            <person name="Nakauchi H."/>
            <person name="Ng P."/>
            <person name="Nilsson R."/>
            <person name="Nishiguchi S."/>
            <person name="Nishikawa S."/>
            <person name="Nori F."/>
            <person name="Ohara O."/>
            <person name="Okazaki Y."/>
            <person name="Orlando V."/>
            <person name="Pang K.C."/>
            <person name="Pavan W.J."/>
            <person name="Pavesi G."/>
            <person name="Pesole G."/>
            <person name="Petrovsky N."/>
            <person name="Piazza S."/>
            <person name="Reed J."/>
            <person name="Reid J.F."/>
            <person name="Ring B.Z."/>
            <person name="Ringwald M."/>
            <person name="Rost B."/>
            <person name="Ruan Y."/>
            <person name="Salzberg S.L."/>
            <person name="Sandelin A."/>
            <person name="Schneider C."/>
            <person name="Schoenbach C."/>
            <person name="Sekiguchi K."/>
            <person name="Semple C.A."/>
            <person name="Seno S."/>
            <person name="Sessa L."/>
            <person name="Sheng Y."/>
            <person name="Shibata Y."/>
            <person name="Shimada H."/>
            <person name="Shimada K."/>
            <person name="Silva D."/>
            <person name="Sinclair B."/>
            <person name="Sperling S."/>
            <person name="Stupka E."/>
            <person name="Sugiura K."/>
            <person name="Sultana R."/>
            <person name="Takenaka Y."/>
            <person name="Taki K."/>
            <person name="Tammoja K."/>
            <person name="Tan S.L."/>
            <person name="Tang S."/>
            <person name="Taylor M.S."/>
            <person name="Tegner J."/>
            <person name="Teichmann S.A."/>
            <person name="Ueda H.R."/>
            <person name="van Nimwegen E."/>
            <person name="Verardo R."/>
            <person name="Wei C.L."/>
            <person name="Yagi K."/>
            <person name="Yamanishi H."/>
            <person name="Zabarovsky E."/>
            <person name="Zhu S."/>
            <person name="Zimmer A."/>
            <person name="Hide W."/>
            <person name="Bult C."/>
            <person name="Grimmond S.M."/>
            <person name="Teasdale R.D."/>
            <person name="Liu E.T."/>
            <person name="Brusic V."/>
            <person name="Quackenbush J."/>
            <person name="Wahlestedt C."/>
            <person name="Mattick J.S."/>
            <person name="Hume D.A."/>
            <person name="Kai C."/>
            <person name="Sasaki D."/>
            <person name="Tomaru Y."/>
            <person name="Fukuda S."/>
            <person name="Kanamori-Katayama M."/>
            <person name="Suzuki M."/>
            <person name="Aoki J."/>
            <person name="Arakawa T."/>
            <person name="Iida J."/>
            <person name="Imamura K."/>
            <person name="Itoh M."/>
            <person name="Kato T."/>
            <person name="Kawaji H."/>
            <person name="Kawagashira N."/>
            <person name="Kawashima T."/>
            <person name="Kojima M."/>
            <person name="Kondo S."/>
            <person name="Konno H."/>
            <person name="Nakano K."/>
            <person name="Ninomiya N."/>
            <person name="Nishio T."/>
            <person name="Okada M."/>
            <person name="Plessy C."/>
            <person name="Shibata K."/>
            <person name="Shiraki T."/>
            <person name="Suzuki S."/>
            <person name="Tagami M."/>
            <person name="Waki K."/>
            <person name="Watahiki A."/>
            <person name="Okamura-Oho Y."/>
            <person name="Suzuki H."/>
            <person name="Kawai J."/>
            <person name="Hayashizaki Y."/>
        </authorList>
    </citation>
    <scope>NUCLEOTIDE SEQUENCE [LARGE SCALE MRNA]</scope>
    <source>
        <strain>C57BL/6J</strain>
        <tissue>Embryo</tissue>
        <tissue>Pancreas</tissue>
        <tissue>Stomach</tissue>
    </source>
</reference>
<reference key="4">
    <citation type="journal article" date="2009" name="PLoS Biol.">
        <title>Lineage-specific biology revealed by a finished genome assembly of the mouse.</title>
        <authorList>
            <person name="Church D.M."/>
            <person name="Goodstadt L."/>
            <person name="Hillier L.W."/>
            <person name="Zody M.C."/>
            <person name="Goldstein S."/>
            <person name="She X."/>
            <person name="Bult C.J."/>
            <person name="Agarwala R."/>
            <person name="Cherry J.L."/>
            <person name="DiCuccio M."/>
            <person name="Hlavina W."/>
            <person name="Kapustin Y."/>
            <person name="Meric P."/>
            <person name="Maglott D."/>
            <person name="Birtle Z."/>
            <person name="Marques A.C."/>
            <person name="Graves T."/>
            <person name="Zhou S."/>
            <person name="Teague B."/>
            <person name="Potamousis K."/>
            <person name="Churas C."/>
            <person name="Place M."/>
            <person name="Herschleb J."/>
            <person name="Runnheim R."/>
            <person name="Forrest D."/>
            <person name="Amos-Landgraf J."/>
            <person name="Schwartz D.C."/>
            <person name="Cheng Z."/>
            <person name="Lindblad-Toh K."/>
            <person name="Eichler E.E."/>
            <person name="Ponting C.P."/>
        </authorList>
    </citation>
    <scope>NUCLEOTIDE SEQUENCE [LARGE SCALE GENOMIC DNA]</scope>
    <source>
        <strain>C57BL/6J</strain>
    </source>
</reference>
<reference key="5">
    <citation type="journal article" date="2004" name="Genome Res.">
        <title>The status, quality, and expansion of the NIH full-length cDNA project: the Mammalian Gene Collection (MGC).</title>
        <authorList>
            <consortium name="The MGC Project Team"/>
        </authorList>
    </citation>
    <scope>NUCLEOTIDE SEQUENCE [LARGE SCALE MRNA]</scope>
    <source>
        <strain>FVB/N</strain>
        <tissue>Colon</tissue>
    </source>
</reference>
<reference key="6">
    <citation type="submission" date="2007-03" db="UniProtKB">
        <authorList>
            <person name="Lubec G."/>
            <person name="Klug S."/>
        </authorList>
    </citation>
    <scope>PROTEIN SEQUENCE OF 57-69; 111-129; 175-186 AND 364-375</scope>
    <scope>IDENTIFICATION BY MASS SPECTROMETRY</scope>
    <source>
        <tissue>Hippocampus</tissue>
    </source>
</reference>
<reference key="7">
    <citation type="journal article" date="2010" name="Cell">
        <title>A tissue-specific atlas of mouse protein phosphorylation and expression.</title>
        <authorList>
            <person name="Huttlin E.L."/>
            <person name="Jedrychowski M.P."/>
            <person name="Elias J.E."/>
            <person name="Goswami T."/>
            <person name="Rad R."/>
            <person name="Beausoleil S.A."/>
            <person name="Villen J."/>
            <person name="Haas W."/>
            <person name="Sowa M.E."/>
            <person name="Gygi S.P."/>
        </authorList>
    </citation>
    <scope>IDENTIFICATION BY MASS SPECTROMETRY [LARGE SCALE ANALYSIS]</scope>
    <source>
        <tissue>Brain</tissue>
        <tissue>Heart</tissue>
        <tissue>Kidney</tissue>
        <tissue>Lung</tissue>
        <tissue>Pancreas</tissue>
        <tissue>Spleen</tissue>
        <tissue>Testis</tissue>
    </source>
</reference>
<reference key="8">
    <citation type="journal article" date="2007" name="J. Exp. Med.">
        <title>The neutrophil serine protease inhibitor serpinb1 preserves lung defense functions in Pseudomonas aeruginosa infection.</title>
        <authorList>
            <person name="Benarafa C."/>
            <person name="Priebe G.P."/>
            <person name="Remold-O'Donnell E."/>
        </authorList>
    </citation>
    <scope>DISRUPTION PHENOTYPE</scope>
    <scope>FUNCTION</scope>
</reference>
<reference key="9">
    <citation type="journal article" date="2011" name="Methods Enzymol.">
        <title>The SerpinB1 knockout mouse a model for studying neutrophil protease regulation in homeostasis and inflammation.</title>
        <authorList>
            <person name="Benarafa C."/>
        </authorList>
    </citation>
    <scope>FUNCTION</scope>
    <scope>DISRUPTION PHENOTYPE</scope>
</reference>
<reference key="10">
    <citation type="journal article" date="2011" name="J. Leukoc. Biol.">
        <title>SerpinB1 protects the mature neutrophil reserve in the bone marrow.</title>
        <authorList>
            <person name="Benarafa C."/>
            <person name="LeCuyer T.E."/>
            <person name="Baumann M."/>
            <person name="Stolley J.M."/>
            <person name="Cremona T.P."/>
            <person name="Remold-O'Donnell E."/>
        </authorList>
    </citation>
    <scope>DISRUPTION PHENOTYPE</scope>
    <scope>FUNCTION</scope>
</reference>
<reference key="11">
    <citation type="journal article" date="2016" name="Cell Metab.">
        <title>SerpinB1 Promotes Pancreatic beta Cell Proliferation.</title>
        <authorList>
            <person name="El Ouaamari A."/>
            <person name="Dirice E."/>
            <person name="Gedeon N."/>
            <person name="Hu J."/>
            <person name="Zhou J.Y."/>
            <person name="Shirakawa J."/>
            <person name="Hou L."/>
            <person name="Goodman J."/>
            <person name="Karampelias C."/>
            <person name="Qiang G."/>
            <person name="Boucher J."/>
            <person name="Martinez R."/>
            <person name="Gritsenko M.A."/>
            <person name="De Jesus D.F."/>
            <person name="Kahraman S."/>
            <person name="Bhatt S."/>
            <person name="Smith R.D."/>
            <person name="Beer H.D."/>
            <person name="Jungtrakoon P."/>
            <person name="Gong Y."/>
            <person name="Goldfine A.B."/>
            <person name="Liew C.W."/>
            <person name="Doria A."/>
            <person name="Andersson O."/>
            <person name="Qian W.J."/>
            <person name="Remold-O'Donnell E."/>
            <person name="Kulkarni R.N."/>
        </authorList>
    </citation>
    <scope>FUNCTION</scope>
    <scope>SUBCELLULAR LOCATION</scope>
    <scope>DISRUPTION PHENOTYPE</scope>
</reference>
<reference key="12">
    <citation type="journal article" date="2019" name="Nat. Immunol.">
        <title>SERPINB1-mediated checkpoint of inflammatory caspase activation.</title>
        <authorList>
            <person name="Choi Y.J."/>
            <person name="Kim S."/>
            <person name="Choi Y."/>
            <person name="Nielsen T.B."/>
            <person name="Yan J."/>
            <person name="Lu A."/>
            <person name="Ruan J."/>
            <person name="Lee H.R."/>
            <person name="Wu H."/>
            <person name="Spellberg B."/>
            <person name="Jung J.U."/>
        </authorList>
    </citation>
    <scope>FUNCTION</scope>
    <scope>INTERACTION WITH CASP1 AND CASP4</scope>
    <scope>DISRUPTION PHENOTYPE</scope>
</reference>
<accession>Q9D154</accession>
<accession>Q3TV23</accession>
<accession>Q5SUV7</accession>
<accession>Q9D0S8</accession>
<accession>Q9D7S8</accession>
<dbReference type="EMBL" id="AF426024">
    <property type="protein sequence ID" value="AAL57486.1"/>
    <property type="molecule type" value="mRNA"/>
</dbReference>
<dbReference type="EMBL" id="AF521697">
    <property type="protein sequence ID" value="AAM95933.1"/>
    <property type="molecule type" value="Genomic_DNA"/>
</dbReference>
<dbReference type="EMBL" id="AK003930">
    <property type="protein sequence ID" value="BAB23079.1"/>
    <property type="molecule type" value="mRNA"/>
</dbReference>
<dbReference type="EMBL" id="AK004500">
    <property type="protein sequence ID" value="BAB23335.1"/>
    <property type="status" value="ALT_FRAME"/>
    <property type="molecule type" value="mRNA"/>
</dbReference>
<dbReference type="EMBL" id="AK008914">
    <property type="protein sequence ID" value="BAB25964.1"/>
    <property type="molecule type" value="mRNA"/>
</dbReference>
<dbReference type="EMBL" id="AK160167">
    <property type="protein sequence ID" value="BAE35668.1"/>
    <property type="molecule type" value="mRNA"/>
</dbReference>
<dbReference type="EMBL" id="AK160456">
    <property type="protein sequence ID" value="BAE35797.1"/>
    <property type="molecule type" value="mRNA"/>
</dbReference>
<dbReference type="EMBL" id="AL645808">
    <property type="protein sequence ID" value="CAI25648.1"/>
    <property type="status" value="ALT_SEQ"/>
    <property type="molecule type" value="Genomic_DNA"/>
</dbReference>
<dbReference type="EMBL" id="BC011140">
    <property type="protein sequence ID" value="AAH11140.1"/>
    <property type="molecule type" value="mRNA"/>
</dbReference>
<dbReference type="EMBL" id="BC104333">
    <property type="protein sequence ID" value="AAI04334.1"/>
    <property type="molecule type" value="mRNA"/>
</dbReference>
<dbReference type="CCDS" id="CCDS26428.1"/>
<dbReference type="RefSeq" id="NP_079705.2">
    <property type="nucleotide sequence ID" value="NM_025429.2"/>
</dbReference>
<dbReference type="RefSeq" id="XP_006516787.1">
    <property type="nucleotide sequence ID" value="XM_006516724.3"/>
</dbReference>
<dbReference type="RefSeq" id="XP_030103208.1">
    <property type="nucleotide sequence ID" value="XM_030247348.2"/>
</dbReference>
<dbReference type="SMR" id="Q9D154"/>
<dbReference type="BioGRID" id="211307">
    <property type="interactions" value="9"/>
</dbReference>
<dbReference type="FunCoup" id="Q9D154">
    <property type="interactions" value="741"/>
</dbReference>
<dbReference type="IntAct" id="Q9D154">
    <property type="interactions" value="1"/>
</dbReference>
<dbReference type="MINT" id="Q9D154"/>
<dbReference type="STRING" id="10090.ENSMUSP00000075690"/>
<dbReference type="MEROPS" id="I04.006"/>
<dbReference type="GlyGen" id="Q9D154">
    <property type="glycosylation" value="1 site, 1 O-linked glycan (1 site)"/>
</dbReference>
<dbReference type="iPTMnet" id="Q9D154"/>
<dbReference type="PhosphoSitePlus" id="Q9D154"/>
<dbReference type="SwissPalm" id="Q9D154"/>
<dbReference type="jPOST" id="Q9D154"/>
<dbReference type="PaxDb" id="10090-ENSMUSP00000075690"/>
<dbReference type="PeptideAtlas" id="Q9D154"/>
<dbReference type="ProteomicsDB" id="269475"/>
<dbReference type="Pumba" id="Q9D154"/>
<dbReference type="DNASU" id="66222"/>
<dbReference type="Ensembl" id="ENSMUST00000076352.8">
    <property type="protein sequence ID" value="ENSMUSP00000075690.7"/>
    <property type="gene ID" value="ENSMUSG00000044734.17"/>
</dbReference>
<dbReference type="GeneID" id="66222"/>
<dbReference type="KEGG" id="mmu:66222"/>
<dbReference type="UCSC" id="uc007pzu.1">
    <property type="organism name" value="mouse"/>
</dbReference>
<dbReference type="AGR" id="MGI:1913472"/>
<dbReference type="CTD" id="66222"/>
<dbReference type="MGI" id="MGI:1913472">
    <property type="gene designation" value="Serpinb1a"/>
</dbReference>
<dbReference type="VEuPathDB" id="HostDB:ENSMUSG00000044734"/>
<dbReference type="eggNOG" id="KOG2392">
    <property type="taxonomic scope" value="Eukaryota"/>
</dbReference>
<dbReference type="GeneTree" id="ENSGT00940000154573"/>
<dbReference type="HOGENOM" id="CLU_023330_0_2_1"/>
<dbReference type="InParanoid" id="Q9D154"/>
<dbReference type="OMA" id="YFNAAWA"/>
<dbReference type="OrthoDB" id="671595at2759"/>
<dbReference type="PhylomeDB" id="Q9D154"/>
<dbReference type="TreeFam" id="TF352619"/>
<dbReference type="Reactome" id="R-MMU-6798695">
    <property type="pathway name" value="Neutrophil degranulation"/>
</dbReference>
<dbReference type="BioGRID-ORCS" id="66222">
    <property type="hits" value="0 hits in 76 CRISPR screens"/>
</dbReference>
<dbReference type="ChiTaRS" id="Serpinb1a">
    <property type="organism name" value="mouse"/>
</dbReference>
<dbReference type="PRO" id="PR:Q9D154"/>
<dbReference type="Proteomes" id="UP000000589">
    <property type="component" value="Chromosome 13"/>
</dbReference>
<dbReference type="RNAct" id="Q9D154">
    <property type="molecule type" value="protein"/>
</dbReference>
<dbReference type="Bgee" id="ENSMUSG00000044734">
    <property type="expression patterns" value="Expressed in small intestine Peyer's patch and 220 other cell types or tissues"/>
</dbReference>
<dbReference type="ExpressionAtlas" id="Q9D154">
    <property type="expression patterns" value="baseline and differential"/>
</dbReference>
<dbReference type="GO" id="GO:0062023">
    <property type="term" value="C:collagen-containing extracellular matrix"/>
    <property type="evidence" value="ECO:0007005"/>
    <property type="project" value="BHF-UCL"/>
</dbReference>
<dbReference type="GO" id="GO:0044194">
    <property type="term" value="C:cytolytic granule"/>
    <property type="evidence" value="ECO:0007669"/>
    <property type="project" value="UniProtKB-SubCell"/>
</dbReference>
<dbReference type="GO" id="GO:0005769">
    <property type="term" value="C:early endosome"/>
    <property type="evidence" value="ECO:0007669"/>
    <property type="project" value="UniProtKB-SubCell"/>
</dbReference>
<dbReference type="GO" id="GO:0005576">
    <property type="term" value="C:extracellular region"/>
    <property type="evidence" value="ECO:0000314"/>
    <property type="project" value="UniProtKB"/>
</dbReference>
<dbReference type="GO" id="GO:0005615">
    <property type="term" value="C:extracellular space"/>
    <property type="evidence" value="ECO:0007669"/>
    <property type="project" value="InterPro"/>
</dbReference>
<dbReference type="GO" id="GO:0004867">
    <property type="term" value="F:serine-type endopeptidase inhibitor activity"/>
    <property type="evidence" value="ECO:0007669"/>
    <property type="project" value="UniProtKB-KW"/>
</dbReference>
<dbReference type="GO" id="GO:0019725">
    <property type="term" value="P:cellular homeostasis"/>
    <property type="evidence" value="ECO:0000314"/>
    <property type="project" value="UniProtKB"/>
</dbReference>
<dbReference type="GO" id="GO:0006954">
    <property type="term" value="P:inflammatory response"/>
    <property type="evidence" value="ECO:0000314"/>
    <property type="project" value="UniProtKB"/>
</dbReference>
<dbReference type="GO" id="GO:0032691">
    <property type="term" value="P:negative regulation of interleukin-1 beta production"/>
    <property type="evidence" value="ECO:0000315"/>
    <property type="project" value="UniProtKB"/>
</dbReference>
<dbReference type="GO" id="GO:0045088">
    <property type="term" value="P:regulation of innate immune response"/>
    <property type="evidence" value="ECO:0000314"/>
    <property type="project" value="UniProtKB"/>
</dbReference>
<dbReference type="GO" id="GO:0042176">
    <property type="term" value="P:regulation of protein catabolic process"/>
    <property type="evidence" value="ECO:0000353"/>
    <property type="project" value="MGI"/>
</dbReference>
<dbReference type="GO" id="GO:0044342">
    <property type="term" value="P:type B pancreatic cell proliferation"/>
    <property type="evidence" value="ECO:0000314"/>
    <property type="project" value="UniProtKB"/>
</dbReference>
<dbReference type="CDD" id="cd19560">
    <property type="entry name" value="serpinB1_LEI"/>
    <property type="match status" value="1"/>
</dbReference>
<dbReference type="FunFam" id="2.10.310.10:FF:000001">
    <property type="entry name" value="Serpin family A member 1"/>
    <property type="match status" value="1"/>
</dbReference>
<dbReference type="FunFam" id="3.30.497.10:FF:000004">
    <property type="entry name" value="Serpin family B member 1"/>
    <property type="match status" value="1"/>
</dbReference>
<dbReference type="FunFam" id="2.30.39.10:FF:000014">
    <property type="entry name" value="Serpin family B member 9"/>
    <property type="match status" value="1"/>
</dbReference>
<dbReference type="Gene3D" id="2.30.39.10">
    <property type="entry name" value="Alpha-1-antitrypsin, domain 1"/>
    <property type="match status" value="1"/>
</dbReference>
<dbReference type="Gene3D" id="3.30.497.10">
    <property type="entry name" value="Antithrombin, subunit I, domain 2"/>
    <property type="match status" value="1"/>
</dbReference>
<dbReference type="InterPro" id="IPR023795">
    <property type="entry name" value="Serpin_CS"/>
</dbReference>
<dbReference type="InterPro" id="IPR023796">
    <property type="entry name" value="Serpin_dom"/>
</dbReference>
<dbReference type="InterPro" id="IPR000215">
    <property type="entry name" value="Serpin_fam"/>
</dbReference>
<dbReference type="InterPro" id="IPR036186">
    <property type="entry name" value="Serpin_sf"/>
</dbReference>
<dbReference type="InterPro" id="IPR042178">
    <property type="entry name" value="Serpin_sf_1"/>
</dbReference>
<dbReference type="InterPro" id="IPR042185">
    <property type="entry name" value="Serpin_sf_2"/>
</dbReference>
<dbReference type="PANTHER" id="PTHR11461:SF180">
    <property type="entry name" value="LEUKOCYTE ELASTASE INHIBITOR"/>
    <property type="match status" value="1"/>
</dbReference>
<dbReference type="PANTHER" id="PTHR11461">
    <property type="entry name" value="SERINE PROTEASE INHIBITOR, SERPIN"/>
    <property type="match status" value="1"/>
</dbReference>
<dbReference type="Pfam" id="PF00079">
    <property type="entry name" value="Serpin"/>
    <property type="match status" value="1"/>
</dbReference>
<dbReference type="SMART" id="SM00093">
    <property type="entry name" value="SERPIN"/>
    <property type="match status" value="1"/>
</dbReference>
<dbReference type="SUPFAM" id="SSF56574">
    <property type="entry name" value="Serpins"/>
    <property type="match status" value="1"/>
</dbReference>
<dbReference type="PROSITE" id="PS00284">
    <property type="entry name" value="SERPIN"/>
    <property type="match status" value="1"/>
</dbReference>
<gene>
    <name type="primary">Serpinb1a</name>
    <name type="synonym">Serpinb1</name>
</gene>
<protein>
    <recommendedName>
        <fullName>Leukocyte elastase inhibitor A</fullName>
    </recommendedName>
    <alternativeName>
        <fullName>Serine protease inhibitor EIA</fullName>
    </alternativeName>
    <alternativeName>
        <fullName>Serpin B1a</fullName>
    </alternativeName>
</protein>
<sequence>MEQLSSANTLFALELFQTLNESSPTGNIFFSPFSISSALAMVILGAKGSTAAQLSKTFHFDSVEDIHSRFQSLNAEVSKRGASHTLKLANRLYGEKTYNFLPEYLASTQKMYGADLAPVDFLHASEDARKEINQWVKGQTEGKIPELLSVGVVDSMTKLVLVNAIYFKGMWEEKFMTEDTTDAPFRLSKKDTKTVKMMYQKKKFPFGYISDLKCKVLEMPYQGGELSMVILLPKDIEDESTGLKKIEKQITLEKLLEWTKRENLEFIDVHVKLPRFKIEESYTLNSNLGRLGVQDLFSSSKADLSGMSGSRDLFISKIVHKSFVEVNEEGTEAAAATGGIATFCMLLPEEEFTVDHPFIFFIRHNPTSNVLFLGRVCSP</sequence>
<name>ILEUA_MOUSE</name>